<reference key="1">
    <citation type="journal article" date="2011" name="J. Bacteriol.">
        <title>Complete genome sequence of Lactobacillus buchneri NRRL B-30929, a novel strain from a commercial ethanol plant.</title>
        <authorList>
            <consortium name="US DOE Joint Genome Institute"/>
            <person name="Liu S."/>
            <person name="Leathers T.D."/>
            <person name="Copeland A."/>
            <person name="Chertkov O."/>
            <person name="Goodwin L."/>
            <person name="Mills D.A."/>
        </authorList>
    </citation>
    <scope>NUCLEOTIDE SEQUENCE [LARGE SCALE GENOMIC DNA]</scope>
    <source>
        <strain>NRRL B-30929</strain>
    </source>
</reference>
<organism>
    <name type="scientific">Lentilactobacillus buchneri (strain NRRL B-30929)</name>
    <name type="common">Lactobacillus buchneri</name>
    <dbReference type="NCBI Taxonomy" id="511437"/>
    <lineage>
        <taxon>Bacteria</taxon>
        <taxon>Bacillati</taxon>
        <taxon>Bacillota</taxon>
        <taxon>Bacilli</taxon>
        <taxon>Lactobacillales</taxon>
        <taxon>Lactobacillaceae</taxon>
        <taxon>Lentilactobacillus</taxon>
    </lineage>
</organism>
<protein>
    <recommendedName>
        <fullName evidence="1">Cell division protein DivIB</fullName>
    </recommendedName>
</protein>
<accession>F4FSX0</accession>
<dbReference type="EMBL" id="CP002652">
    <property type="protein sequence ID" value="AEB72957.1"/>
    <property type="molecule type" value="Genomic_DNA"/>
</dbReference>
<dbReference type="RefSeq" id="WP_013727514.1">
    <property type="nucleotide sequence ID" value="NC_015428.1"/>
</dbReference>
<dbReference type="KEGG" id="lbh:Lbuc_0693"/>
<dbReference type="eggNOG" id="COG1589">
    <property type="taxonomic scope" value="Bacteria"/>
</dbReference>
<dbReference type="HOGENOM" id="CLU_046278_0_1_9"/>
<dbReference type="GO" id="GO:0032153">
    <property type="term" value="C:cell division site"/>
    <property type="evidence" value="ECO:0007669"/>
    <property type="project" value="UniProtKB-UniRule"/>
</dbReference>
<dbReference type="GO" id="GO:0005886">
    <property type="term" value="C:plasma membrane"/>
    <property type="evidence" value="ECO:0007669"/>
    <property type="project" value="UniProtKB-SubCell"/>
</dbReference>
<dbReference type="GO" id="GO:0043093">
    <property type="term" value="P:FtsZ-dependent cytokinesis"/>
    <property type="evidence" value="ECO:0007669"/>
    <property type="project" value="UniProtKB-UniRule"/>
</dbReference>
<dbReference type="Gene3D" id="3.40.50.10960">
    <property type="match status" value="1"/>
</dbReference>
<dbReference type="HAMAP" id="MF_00912">
    <property type="entry name" value="DivIB"/>
    <property type="match status" value="1"/>
</dbReference>
<dbReference type="InterPro" id="IPR005548">
    <property type="entry name" value="Cell_div_FtsQ/DivIB_C"/>
</dbReference>
<dbReference type="InterPro" id="IPR026580">
    <property type="entry name" value="DivIB"/>
</dbReference>
<dbReference type="InterPro" id="IPR050487">
    <property type="entry name" value="FtsQ_DivIB"/>
</dbReference>
<dbReference type="InterPro" id="IPR034746">
    <property type="entry name" value="POTRA"/>
</dbReference>
<dbReference type="InterPro" id="IPR013685">
    <property type="entry name" value="POTRA_FtsQ_type"/>
</dbReference>
<dbReference type="PANTHER" id="PTHR37820">
    <property type="entry name" value="CELL DIVISION PROTEIN DIVIB"/>
    <property type="match status" value="1"/>
</dbReference>
<dbReference type="PANTHER" id="PTHR37820:SF1">
    <property type="entry name" value="CELL DIVISION PROTEIN FTSQ"/>
    <property type="match status" value="1"/>
</dbReference>
<dbReference type="Pfam" id="PF03799">
    <property type="entry name" value="FtsQ_DivIB_C"/>
    <property type="match status" value="1"/>
</dbReference>
<dbReference type="Pfam" id="PF08478">
    <property type="entry name" value="POTRA_1"/>
    <property type="match status" value="1"/>
</dbReference>
<dbReference type="PROSITE" id="PS51779">
    <property type="entry name" value="POTRA"/>
    <property type="match status" value="1"/>
</dbReference>
<name>DIVIB_LENBN</name>
<comment type="function">
    <text evidence="1">Cell division protein that may be involved in stabilizing or promoting the assembly of the division complex.</text>
</comment>
<comment type="subcellular location">
    <subcellularLocation>
        <location evidence="1">Cell membrane</location>
        <topology evidence="1">Single-pass type II membrane protein</topology>
    </subcellularLocation>
    <text evidence="1">Localizes to the division septum.</text>
</comment>
<comment type="similarity">
    <text evidence="1">Belongs to the FtsQ/DivIB family. DivIB subfamily.</text>
</comment>
<evidence type="ECO:0000255" key="1">
    <source>
        <dbReference type="HAMAP-Rule" id="MF_00912"/>
    </source>
</evidence>
<evidence type="ECO:0000255" key="2">
    <source>
        <dbReference type="PROSITE-ProRule" id="PRU01115"/>
    </source>
</evidence>
<keyword id="KW-0131">Cell cycle</keyword>
<keyword id="KW-0132">Cell division</keyword>
<keyword id="KW-1003">Cell membrane</keyword>
<keyword id="KW-0472">Membrane</keyword>
<keyword id="KW-0812">Transmembrane</keyword>
<keyword id="KW-1133">Transmembrane helix</keyword>
<gene>
    <name evidence="1" type="primary">divIB</name>
    <name type="ordered locus">Lbuc_0693</name>
</gene>
<proteinExistence type="inferred from homology"/>
<feature type="chain" id="PRO_0000414770" description="Cell division protein DivIB">
    <location>
        <begin position="1"/>
        <end position="260"/>
    </location>
</feature>
<feature type="topological domain" description="Cytoplasmic" evidence="1">
    <location>
        <begin position="1"/>
        <end position="25"/>
    </location>
</feature>
<feature type="transmembrane region" description="Helical" evidence="1">
    <location>
        <begin position="26"/>
        <end position="46"/>
    </location>
</feature>
<feature type="topological domain" description="Extracellular" evidence="1">
    <location>
        <begin position="47"/>
        <end position="260"/>
    </location>
</feature>
<feature type="domain" description="POTRA" evidence="2">
    <location>
        <begin position="48"/>
        <end position="119"/>
    </location>
</feature>
<sequence>MGAQDQNGKNHGGLFRDFQNRNVKKMWPLVMPITIILLVMIFMISSYSRVKKVTVSGNEIVSDQQIKAFSPVKKGTSLFAVWGKTDKLAQSLKQRSRRMQSVKMKLVNFNQVKIKVEEYPTIGYLFVHGGYQPILKSGVIIKGKVLNPKAGFPVLKKFQNPKKLRRTIKQYRRISPPVRAVMNTISFSPTKSNPDRIFIQMSDGNKVYASISTFGDKMDYYPSISSKLKVKSVINLEVGAYSYPIPQKQTSTKTTSVQGY</sequence>